<sequence>MTIINSISNFGSNNSFSNNNTVNQKSVIKRSKQMKNDNTSIGSSFKNDNLLSAHVSGEGVSDCKLL</sequence>
<feature type="chain" id="PRO_0000351226" description="Uncharacterized protein DDB_G0282585">
    <location>
        <begin position="1"/>
        <end position="66"/>
    </location>
</feature>
<feature type="region of interest" description="Disordered" evidence="1">
    <location>
        <begin position="1"/>
        <end position="47"/>
    </location>
</feature>
<feature type="compositionally biased region" description="Low complexity" evidence="1">
    <location>
        <begin position="1"/>
        <end position="20"/>
    </location>
</feature>
<feature type="compositionally biased region" description="Polar residues" evidence="1">
    <location>
        <begin position="36"/>
        <end position="47"/>
    </location>
</feature>
<reference key="1">
    <citation type="journal article" date="2005" name="Nature">
        <title>The genome of the social amoeba Dictyostelium discoideum.</title>
        <authorList>
            <person name="Eichinger L."/>
            <person name="Pachebat J.A."/>
            <person name="Gloeckner G."/>
            <person name="Rajandream M.A."/>
            <person name="Sucgang R."/>
            <person name="Berriman M."/>
            <person name="Song J."/>
            <person name="Olsen R."/>
            <person name="Szafranski K."/>
            <person name="Xu Q."/>
            <person name="Tunggal B."/>
            <person name="Kummerfeld S."/>
            <person name="Madera M."/>
            <person name="Konfortov B.A."/>
            <person name="Rivero F."/>
            <person name="Bankier A.T."/>
            <person name="Lehmann R."/>
            <person name="Hamlin N."/>
            <person name="Davies R."/>
            <person name="Gaudet P."/>
            <person name="Fey P."/>
            <person name="Pilcher K."/>
            <person name="Chen G."/>
            <person name="Saunders D."/>
            <person name="Sodergren E.J."/>
            <person name="Davis P."/>
            <person name="Kerhornou A."/>
            <person name="Nie X."/>
            <person name="Hall N."/>
            <person name="Anjard C."/>
            <person name="Hemphill L."/>
            <person name="Bason N."/>
            <person name="Farbrother P."/>
            <person name="Desany B."/>
            <person name="Just E."/>
            <person name="Morio T."/>
            <person name="Rost R."/>
            <person name="Churcher C.M."/>
            <person name="Cooper J."/>
            <person name="Haydock S."/>
            <person name="van Driessche N."/>
            <person name="Cronin A."/>
            <person name="Goodhead I."/>
            <person name="Muzny D.M."/>
            <person name="Mourier T."/>
            <person name="Pain A."/>
            <person name="Lu M."/>
            <person name="Harper D."/>
            <person name="Lindsay R."/>
            <person name="Hauser H."/>
            <person name="James K.D."/>
            <person name="Quiles M."/>
            <person name="Madan Babu M."/>
            <person name="Saito T."/>
            <person name="Buchrieser C."/>
            <person name="Wardroper A."/>
            <person name="Felder M."/>
            <person name="Thangavelu M."/>
            <person name="Johnson D."/>
            <person name="Knights A."/>
            <person name="Loulseged H."/>
            <person name="Mungall K.L."/>
            <person name="Oliver K."/>
            <person name="Price C."/>
            <person name="Quail M.A."/>
            <person name="Urushihara H."/>
            <person name="Hernandez J."/>
            <person name="Rabbinowitsch E."/>
            <person name="Steffen D."/>
            <person name="Sanders M."/>
            <person name="Ma J."/>
            <person name="Kohara Y."/>
            <person name="Sharp S."/>
            <person name="Simmonds M.N."/>
            <person name="Spiegler S."/>
            <person name="Tivey A."/>
            <person name="Sugano S."/>
            <person name="White B."/>
            <person name="Walker D."/>
            <person name="Woodward J.R."/>
            <person name="Winckler T."/>
            <person name="Tanaka Y."/>
            <person name="Shaulsky G."/>
            <person name="Schleicher M."/>
            <person name="Weinstock G.M."/>
            <person name="Rosenthal A."/>
            <person name="Cox E.C."/>
            <person name="Chisholm R.L."/>
            <person name="Gibbs R.A."/>
            <person name="Loomis W.F."/>
            <person name="Platzer M."/>
            <person name="Kay R.R."/>
            <person name="Williams J.G."/>
            <person name="Dear P.H."/>
            <person name="Noegel A.A."/>
            <person name="Barrell B.G."/>
            <person name="Kuspa A."/>
        </authorList>
    </citation>
    <scope>NUCLEOTIDE SEQUENCE [LARGE SCALE GENOMIC DNA]</scope>
    <source>
        <strain>AX4</strain>
    </source>
</reference>
<evidence type="ECO:0000256" key="1">
    <source>
        <dbReference type="SAM" id="MobiDB-lite"/>
    </source>
</evidence>
<proteinExistence type="predicted"/>
<organism>
    <name type="scientific">Dictyostelium discoideum</name>
    <name type="common">Social amoeba</name>
    <dbReference type="NCBI Taxonomy" id="44689"/>
    <lineage>
        <taxon>Eukaryota</taxon>
        <taxon>Amoebozoa</taxon>
        <taxon>Evosea</taxon>
        <taxon>Eumycetozoa</taxon>
        <taxon>Dictyostelia</taxon>
        <taxon>Dictyosteliales</taxon>
        <taxon>Dictyosteliaceae</taxon>
        <taxon>Dictyostelium</taxon>
    </lineage>
</organism>
<keyword id="KW-1185">Reference proteome</keyword>
<dbReference type="EMBL" id="AAFI02000047">
    <property type="protein sequence ID" value="EAL66152.1"/>
    <property type="molecule type" value="Genomic_DNA"/>
</dbReference>
<dbReference type="RefSeq" id="XP_640141.1">
    <property type="nucleotide sequence ID" value="XM_635049.1"/>
</dbReference>
<dbReference type="SMR" id="Q54S98"/>
<dbReference type="PaxDb" id="44689-DDB0231194"/>
<dbReference type="EnsemblProtists" id="EAL66152">
    <property type="protein sequence ID" value="EAL66152"/>
    <property type="gene ID" value="DDB_G0282585"/>
</dbReference>
<dbReference type="GeneID" id="8623678"/>
<dbReference type="KEGG" id="ddi:DDB_G0282585"/>
<dbReference type="dictyBase" id="DDB_G0282585"/>
<dbReference type="VEuPathDB" id="AmoebaDB:DDB_G0282585"/>
<dbReference type="HOGENOM" id="CLU_2836574_0_0_1"/>
<dbReference type="InParanoid" id="Q54S98"/>
<dbReference type="PRO" id="PR:Q54S98"/>
<dbReference type="Proteomes" id="UP000002195">
    <property type="component" value="Chromosome 3"/>
</dbReference>
<protein>
    <recommendedName>
        <fullName>Uncharacterized protein DDB_G0282585</fullName>
    </recommendedName>
</protein>
<gene>
    <name type="ORF">DDB_G0282585</name>
</gene>
<accession>Q54S98</accession>
<name>Y1194_DICDI</name>